<proteinExistence type="inferred from homology"/>
<keyword id="KW-0997">Cell inner membrane</keyword>
<keyword id="KW-1003">Cell membrane</keyword>
<keyword id="KW-0472">Membrane</keyword>
<keyword id="KW-0520">NAD</keyword>
<keyword id="KW-0874">Quinone</keyword>
<keyword id="KW-1185">Reference proteome</keyword>
<keyword id="KW-1278">Translocase</keyword>
<keyword id="KW-0812">Transmembrane</keyword>
<keyword id="KW-1133">Transmembrane helix</keyword>
<keyword id="KW-0813">Transport</keyword>
<keyword id="KW-0830">Ubiquinone</keyword>
<sequence length="512" mass="55872">MNLFDLSILPFLNLAQVVNESRVPNVPDLLSVLPALVLATGGVFLICLSVLFKTKEFIIVRYVSGLILLLAFAAVFYTSFRFPGNGFHFSGQIENSVLSFWLNLIYISMAIGTAAIVPRILKNHKIEFPEFYPLLLFATCGMTLMTTGQDFILVFVALELMSICLYILIGMARSDLFSLEATLKYFLLGSFSSGFMLMGIAFLFGGSGSTNITEALKPLTIAGYQGNFAKIGLVLFITGVAFKIALFPYHAWTPDAYEGALTPVTGYMSTAAKAASIGLLLILYTKLPLPLENSTWAWLPGILALCSMIYGNLLALKQENLKRMLAYSSIAHAGYVVAGISAGIKEEVLFYLIVYSFMSLGAFAILAYLEEGTRQVTFFSVQSLSGVKPLTAIAINIFFMSLAGVPPFGGFWAKLFLFQKLAESETLMNRILLIGGVTNSALALYYYLRIGIATFMSSDEGEISRNHAAPYSVGVTGVVLFCLLMVSVGWFLLVPGNLLALGELWLSSSIFR</sequence>
<protein>
    <recommendedName>
        <fullName evidence="1">NADH-quinone oxidoreductase subunit N</fullName>
        <ecNumber evidence="1">7.1.1.-</ecNumber>
    </recommendedName>
    <alternativeName>
        <fullName evidence="1">NADH dehydrogenase I subunit N</fullName>
    </alternativeName>
    <alternativeName>
        <fullName evidence="1">NDH-1 subunit N</fullName>
    </alternativeName>
</protein>
<organism>
    <name type="scientific">Leptospira interrogans serogroup Icterohaemorrhagiae serovar Lai (strain 56601)</name>
    <dbReference type="NCBI Taxonomy" id="189518"/>
    <lineage>
        <taxon>Bacteria</taxon>
        <taxon>Pseudomonadati</taxon>
        <taxon>Spirochaetota</taxon>
        <taxon>Spirochaetia</taxon>
        <taxon>Leptospirales</taxon>
        <taxon>Leptospiraceae</taxon>
        <taxon>Leptospira</taxon>
    </lineage>
</organism>
<accession>Q8F7R0</accession>
<feature type="chain" id="PRO_0000391173" description="NADH-quinone oxidoreductase subunit N">
    <location>
        <begin position="1"/>
        <end position="512"/>
    </location>
</feature>
<feature type="transmembrane region" description="Helical" evidence="1">
    <location>
        <begin position="32"/>
        <end position="52"/>
    </location>
</feature>
<feature type="transmembrane region" description="Helical" evidence="1">
    <location>
        <begin position="57"/>
        <end position="77"/>
    </location>
</feature>
<feature type="transmembrane region" description="Helical" evidence="1">
    <location>
        <begin position="97"/>
        <end position="117"/>
    </location>
</feature>
<feature type="transmembrane region" description="Helical" evidence="1">
    <location>
        <begin position="126"/>
        <end position="146"/>
    </location>
</feature>
<feature type="transmembrane region" description="Helical" evidence="1">
    <location>
        <begin position="151"/>
        <end position="171"/>
    </location>
</feature>
<feature type="transmembrane region" description="Helical" evidence="1">
    <location>
        <begin position="186"/>
        <end position="206"/>
    </location>
</feature>
<feature type="transmembrane region" description="Helical" evidence="1">
    <location>
        <begin position="231"/>
        <end position="251"/>
    </location>
</feature>
<feature type="transmembrane region" description="Helical" evidence="1">
    <location>
        <begin position="264"/>
        <end position="284"/>
    </location>
</feature>
<feature type="transmembrane region" description="Helical" evidence="1">
    <location>
        <begin position="296"/>
        <end position="316"/>
    </location>
</feature>
<feature type="transmembrane region" description="Helical" evidence="1">
    <location>
        <begin position="324"/>
        <end position="344"/>
    </location>
</feature>
<feature type="transmembrane region" description="Helical" evidence="1">
    <location>
        <begin position="348"/>
        <end position="368"/>
    </location>
</feature>
<feature type="transmembrane region" description="Helical" evidence="1">
    <location>
        <begin position="392"/>
        <end position="412"/>
    </location>
</feature>
<feature type="transmembrane region" description="Helical" evidence="1">
    <location>
        <begin position="431"/>
        <end position="451"/>
    </location>
</feature>
<feature type="transmembrane region" description="Helical" evidence="1">
    <location>
        <begin position="473"/>
        <end position="493"/>
    </location>
</feature>
<name>NUON_LEPIN</name>
<gene>
    <name evidence="1" type="primary">nuoN</name>
    <name type="ordered locus">LA_0884</name>
</gene>
<evidence type="ECO:0000255" key="1">
    <source>
        <dbReference type="HAMAP-Rule" id="MF_00445"/>
    </source>
</evidence>
<comment type="function">
    <text evidence="1">NDH-1 shuttles electrons from NADH, via FMN and iron-sulfur (Fe-S) centers, to quinones in the respiratory chain. The immediate electron acceptor for the enzyme in this species is believed to be ubiquinone. Couples the redox reaction to proton translocation (for every two electrons transferred, four hydrogen ions are translocated across the cytoplasmic membrane), and thus conserves the redox energy in a proton gradient.</text>
</comment>
<comment type="catalytic activity">
    <reaction evidence="1">
        <text>a quinone + NADH + 5 H(+)(in) = a quinol + NAD(+) + 4 H(+)(out)</text>
        <dbReference type="Rhea" id="RHEA:57888"/>
        <dbReference type="ChEBI" id="CHEBI:15378"/>
        <dbReference type="ChEBI" id="CHEBI:24646"/>
        <dbReference type="ChEBI" id="CHEBI:57540"/>
        <dbReference type="ChEBI" id="CHEBI:57945"/>
        <dbReference type="ChEBI" id="CHEBI:132124"/>
    </reaction>
</comment>
<comment type="subunit">
    <text evidence="1">NDH-1 is composed of 14 different subunits. Subunits NuoA, H, J, K, L, M, N constitute the membrane sector of the complex.</text>
</comment>
<comment type="subcellular location">
    <subcellularLocation>
        <location evidence="1">Cell inner membrane</location>
        <topology evidence="1">Multi-pass membrane protein</topology>
    </subcellularLocation>
</comment>
<comment type="similarity">
    <text evidence="1">Belongs to the complex I subunit 2 family.</text>
</comment>
<reference key="1">
    <citation type="journal article" date="2003" name="Nature">
        <title>Unique physiological and pathogenic features of Leptospira interrogans revealed by whole-genome sequencing.</title>
        <authorList>
            <person name="Ren S.-X."/>
            <person name="Fu G."/>
            <person name="Jiang X.-G."/>
            <person name="Zeng R."/>
            <person name="Miao Y.-G."/>
            <person name="Xu H."/>
            <person name="Zhang Y.-X."/>
            <person name="Xiong H."/>
            <person name="Lu G."/>
            <person name="Lu L.-F."/>
            <person name="Jiang H.-Q."/>
            <person name="Jia J."/>
            <person name="Tu Y.-F."/>
            <person name="Jiang J.-X."/>
            <person name="Gu W.-Y."/>
            <person name="Zhang Y.-Q."/>
            <person name="Cai Z."/>
            <person name="Sheng H.-H."/>
            <person name="Yin H.-F."/>
            <person name="Zhang Y."/>
            <person name="Zhu G.-F."/>
            <person name="Wan M."/>
            <person name="Huang H.-L."/>
            <person name="Qian Z."/>
            <person name="Wang S.-Y."/>
            <person name="Ma W."/>
            <person name="Yao Z.-J."/>
            <person name="Shen Y."/>
            <person name="Qiang B.-Q."/>
            <person name="Xia Q.-C."/>
            <person name="Guo X.-K."/>
            <person name="Danchin A."/>
            <person name="Saint Girons I."/>
            <person name="Somerville R.L."/>
            <person name="Wen Y.-M."/>
            <person name="Shi M.-H."/>
            <person name="Chen Z."/>
            <person name="Xu J.-G."/>
            <person name="Zhao G.-P."/>
        </authorList>
    </citation>
    <scope>NUCLEOTIDE SEQUENCE [LARGE SCALE GENOMIC DNA]</scope>
    <source>
        <strain>56601</strain>
    </source>
</reference>
<dbReference type="EC" id="7.1.1.-" evidence="1"/>
<dbReference type="EMBL" id="AE010300">
    <property type="protein sequence ID" value="AAN48083.1"/>
    <property type="molecule type" value="Genomic_DNA"/>
</dbReference>
<dbReference type="RefSeq" id="NP_711065.1">
    <property type="nucleotide sequence ID" value="NC_004342.2"/>
</dbReference>
<dbReference type="RefSeq" id="WP_001047886.1">
    <property type="nucleotide sequence ID" value="NC_004342.2"/>
</dbReference>
<dbReference type="SMR" id="Q8F7R0"/>
<dbReference type="FunCoup" id="Q8F7R0">
    <property type="interactions" value="115"/>
</dbReference>
<dbReference type="STRING" id="189518.LA_0884"/>
<dbReference type="PaxDb" id="189518-LA_0884"/>
<dbReference type="EnsemblBacteria" id="AAN48083">
    <property type="protein sequence ID" value="AAN48083"/>
    <property type="gene ID" value="LA_0884"/>
</dbReference>
<dbReference type="KEGG" id="lil:LA_0884"/>
<dbReference type="PATRIC" id="fig|189518.3.peg.886"/>
<dbReference type="HOGENOM" id="CLU_007100_1_5_12"/>
<dbReference type="InParanoid" id="Q8F7R0"/>
<dbReference type="OrthoDB" id="9811718at2"/>
<dbReference type="Proteomes" id="UP000001408">
    <property type="component" value="Chromosome I"/>
</dbReference>
<dbReference type="GO" id="GO:0005886">
    <property type="term" value="C:plasma membrane"/>
    <property type="evidence" value="ECO:0007669"/>
    <property type="project" value="UniProtKB-SubCell"/>
</dbReference>
<dbReference type="GO" id="GO:0008137">
    <property type="term" value="F:NADH dehydrogenase (ubiquinone) activity"/>
    <property type="evidence" value="ECO:0007669"/>
    <property type="project" value="InterPro"/>
</dbReference>
<dbReference type="GO" id="GO:0050136">
    <property type="term" value="F:NADH:ubiquinone reductase (non-electrogenic) activity"/>
    <property type="evidence" value="ECO:0007669"/>
    <property type="project" value="UniProtKB-UniRule"/>
</dbReference>
<dbReference type="GO" id="GO:0048038">
    <property type="term" value="F:quinone binding"/>
    <property type="evidence" value="ECO:0007669"/>
    <property type="project" value="UniProtKB-KW"/>
</dbReference>
<dbReference type="GO" id="GO:0042773">
    <property type="term" value="P:ATP synthesis coupled electron transport"/>
    <property type="evidence" value="ECO:0007669"/>
    <property type="project" value="InterPro"/>
</dbReference>
<dbReference type="HAMAP" id="MF_00445">
    <property type="entry name" value="NDH1_NuoN_1"/>
    <property type="match status" value="1"/>
</dbReference>
<dbReference type="InterPro" id="IPR010096">
    <property type="entry name" value="NADH-Q_OxRdtase_suN/2"/>
</dbReference>
<dbReference type="InterPro" id="IPR001750">
    <property type="entry name" value="ND/Mrp_TM"/>
</dbReference>
<dbReference type="NCBIfam" id="TIGR01770">
    <property type="entry name" value="NDH_I_N"/>
    <property type="match status" value="1"/>
</dbReference>
<dbReference type="PANTHER" id="PTHR22773">
    <property type="entry name" value="NADH DEHYDROGENASE"/>
    <property type="match status" value="1"/>
</dbReference>
<dbReference type="Pfam" id="PF00361">
    <property type="entry name" value="Proton_antipo_M"/>
    <property type="match status" value="1"/>
</dbReference>